<dbReference type="EMBL" id="AE017243">
    <property type="protein sequence ID" value="AAZ44167.1"/>
    <property type="molecule type" value="Genomic_DNA"/>
</dbReference>
<dbReference type="RefSeq" id="WP_011205923.1">
    <property type="nucleotide sequence ID" value="NC_007295.1"/>
</dbReference>
<dbReference type="SMR" id="Q4AAQ4"/>
<dbReference type="GeneID" id="41334363"/>
<dbReference type="KEGG" id="mhj:MHJ_0073"/>
<dbReference type="eggNOG" id="COG0048">
    <property type="taxonomic scope" value="Bacteria"/>
</dbReference>
<dbReference type="HOGENOM" id="CLU_104295_1_2_14"/>
<dbReference type="OrthoDB" id="9802366at2"/>
<dbReference type="Proteomes" id="UP000000548">
    <property type="component" value="Chromosome"/>
</dbReference>
<dbReference type="GO" id="GO:0015935">
    <property type="term" value="C:small ribosomal subunit"/>
    <property type="evidence" value="ECO:0007669"/>
    <property type="project" value="InterPro"/>
</dbReference>
<dbReference type="GO" id="GO:0019843">
    <property type="term" value="F:rRNA binding"/>
    <property type="evidence" value="ECO:0007669"/>
    <property type="project" value="UniProtKB-UniRule"/>
</dbReference>
<dbReference type="GO" id="GO:0003735">
    <property type="term" value="F:structural constituent of ribosome"/>
    <property type="evidence" value="ECO:0007669"/>
    <property type="project" value="InterPro"/>
</dbReference>
<dbReference type="GO" id="GO:0000049">
    <property type="term" value="F:tRNA binding"/>
    <property type="evidence" value="ECO:0007669"/>
    <property type="project" value="UniProtKB-UniRule"/>
</dbReference>
<dbReference type="GO" id="GO:0006412">
    <property type="term" value="P:translation"/>
    <property type="evidence" value="ECO:0007669"/>
    <property type="project" value="UniProtKB-UniRule"/>
</dbReference>
<dbReference type="CDD" id="cd03368">
    <property type="entry name" value="Ribosomal_S12"/>
    <property type="match status" value="1"/>
</dbReference>
<dbReference type="FunFam" id="2.40.50.140:FF:000099">
    <property type="entry name" value="Ribosomal protein S12, mitochondrial"/>
    <property type="match status" value="1"/>
</dbReference>
<dbReference type="Gene3D" id="2.40.50.140">
    <property type="entry name" value="Nucleic acid-binding proteins"/>
    <property type="match status" value="1"/>
</dbReference>
<dbReference type="HAMAP" id="MF_00403_B">
    <property type="entry name" value="Ribosomal_uS12_B"/>
    <property type="match status" value="1"/>
</dbReference>
<dbReference type="InterPro" id="IPR012340">
    <property type="entry name" value="NA-bd_OB-fold"/>
</dbReference>
<dbReference type="InterPro" id="IPR006032">
    <property type="entry name" value="Ribosomal_uS12"/>
</dbReference>
<dbReference type="InterPro" id="IPR005679">
    <property type="entry name" value="Ribosomal_uS12_bac"/>
</dbReference>
<dbReference type="NCBIfam" id="TIGR00981">
    <property type="entry name" value="rpsL_bact"/>
    <property type="match status" value="1"/>
</dbReference>
<dbReference type="PANTHER" id="PTHR11652">
    <property type="entry name" value="30S RIBOSOMAL PROTEIN S12 FAMILY MEMBER"/>
    <property type="match status" value="1"/>
</dbReference>
<dbReference type="Pfam" id="PF00164">
    <property type="entry name" value="Ribosom_S12_S23"/>
    <property type="match status" value="1"/>
</dbReference>
<dbReference type="PRINTS" id="PR01034">
    <property type="entry name" value="RIBOSOMALS12"/>
</dbReference>
<dbReference type="SUPFAM" id="SSF50249">
    <property type="entry name" value="Nucleic acid-binding proteins"/>
    <property type="match status" value="1"/>
</dbReference>
<dbReference type="PROSITE" id="PS00055">
    <property type="entry name" value="RIBOSOMAL_S12"/>
    <property type="match status" value="1"/>
</dbReference>
<proteinExistence type="inferred from homology"/>
<protein>
    <recommendedName>
        <fullName evidence="2">Small ribosomal subunit protein uS12</fullName>
    </recommendedName>
    <alternativeName>
        <fullName evidence="4">30S ribosomal protein S12</fullName>
    </alternativeName>
</protein>
<comment type="function">
    <text evidence="2">With S4 and S5 plays an important role in translational accuracy.</text>
</comment>
<comment type="function">
    <text evidence="2">Interacts with and stabilizes bases of the 16S rRNA that are involved in tRNA selection in the A site and with the mRNA backbone. Located at the interface of the 30S and 50S subunits, it traverses the body of the 30S subunit contacting proteins on the other side and probably holding the rRNA structure together. The combined cluster of proteins S8, S12 and S17 appears to hold together the shoulder and platform of the 30S subunit.</text>
</comment>
<comment type="subunit">
    <text evidence="2">Part of the 30S ribosomal subunit. Contacts proteins S8 and S17. May interact with IF1 in the 30S initiation complex.</text>
</comment>
<comment type="similarity">
    <text evidence="2">Belongs to the universal ribosomal protein uS12 family.</text>
</comment>
<gene>
    <name evidence="2" type="primary">rpsL</name>
    <name type="ordered locus">MHJ_0073</name>
</gene>
<accession>Q4AAQ4</accession>
<feature type="chain" id="PRO_0000226395" description="Small ribosomal subunit protein uS12">
    <location>
        <begin position="1"/>
        <end position="139"/>
    </location>
</feature>
<feature type="region of interest" description="Disordered" evidence="3">
    <location>
        <begin position="116"/>
        <end position="139"/>
    </location>
</feature>
<feature type="compositionally biased region" description="Basic residues" evidence="3">
    <location>
        <begin position="124"/>
        <end position="139"/>
    </location>
</feature>
<feature type="modified residue" description="3-methylthioaspartic acid" evidence="1">
    <location>
        <position position="102"/>
    </location>
</feature>
<organism>
    <name type="scientific">Mesomycoplasma hyopneumoniae (strain J / ATCC 25934 / NCTC 10110)</name>
    <name type="common">Mycoplasma hyopneumoniae</name>
    <dbReference type="NCBI Taxonomy" id="262719"/>
    <lineage>
        <taxon>Bacteria</taxon>
        <taxon>Bacillati</taxon>
        <taxon>Mycoplasmatota</taxon>
        <taxon>Mycoplasmoidales</taxon>
        <taxon>Metamycoplasmataceae</taxon>
        <taxon>Mesomycoplasma</taxon>
    </lineage>
</organism>
<name>RS12_MESHJ</name>
<evidence type="ECO:0000250" key="1"/>
<evidence type="ECO:0000255" key="2">
    <source>
        <dbReference type="HAMAP-Rule" id="MF_00403"/>
    </source>
</evidence>
<evidence type="ECO:0000256" key="3">
    <source>
        <dbReference type="SAM" id="MobiDB-lite"/>
    </source>
</evidence>
<evidence type="ECO:0000305" key="4"/>
<reference key="1">
    <citation type="journal article" date="2005" name="J. Bacteriol.">
        <title>Swine and poultry pathogens: the complete genome sequences of two strains of Mycoplasma hyopneumoniae and a strain of Mycoplasma synoviae.</title>
        <authorList>
            <person name="Vasconcelos A.T.R."/>
            <person name="Ferreira H.B."/>
            <person name="Bizarro C.V."/>
            <person name="Bonatto S.L."/>
            <person name="Carvalho M.O."/>
            <person name="Pinto P.M."/>
            <person name="Almeida D.F."/>
            <person name="Almeida L.G.P."/>
            <person name="Almeida R."/>
            <person name="Alves-Junior L."/>
            <person name="Assuncao E.N."/>
            <person name="Azevedo V.A.C."/>
            <person name="Bogo M.R."/>
            <person name="Brigido M.M."/>
            <person name="Brocchi M."/>
            <person name="Burity H.A."/>
            <person name="Camargo A.A."/>
            <person name="Camargo S.S."/>
            <person name="Carepo M.S."/>
            <person name="Carraro D.M."/>
            <person name="de Mattos Cascardo J.C."/>
            <person name="Castro L.A."/>
            <person name="Cavalcanti G."/>
            <person name="Chemale G."/>
            <person name="Collevatti R.G."/>
            <person name="Cunha C.W."/>
            <person name="Dallagiovanna B."/>
            <person name="Dambros B.P."/>
            <person name="Dellagostin O.A."/>
            <person name="Falcao C."/>
            <person name="Fantinatti-Garboggini F."/>
            <person name="Felipe M.S.S."/>
            <person name="Fiorentin L."/>
            <person name="Franco G.R."/>
            <person name="Freitas N.S.A."/>
            <person name="Frias D."/>
            <person name="Grangeiro T.B."/>
            <person name="Grisard E.C."/>
            <person name="Guimaraes C.T."/>
            <person name="Hungria M."/>
            <person name="Jardim S.N."/>
            <person name="Krieger M.A."/>
            <person name="Laurino J.P."/>
            <person name="Lima L.F.A."/>
            <person name="Lopes M.I."/>
            <person name="Loreto E.L.S."/>
            <person name="Madeira H.M.F."/>
            <person name="Manfio G.P."/>
            <person name="Maranhao A.Q."/>
            <person name="Martinkovics C.T."/>
            <person name="Medeiros S.R.B."/>
            <person name="Moreira M.A.M."/>
            <person name="Neiva M."/>
            <person name="Ramalho-Neto C.E."/>
            <person name="Nicolas M.F."/>
            <person name="Oliveira S.C."/>
            <person name="Paixao R.F.C."/>
            <person name="Pedrosa F.O."/>
            <person name="Pena S.D.J."/>
            <person name="Pereira M."/>
            <person name="Pereira-Ferrari L."/>
            <person name="Piffer I."/>
            <person name="Pinto L.S."/>
            <person name="Potrich D.P."/>
            <person name="Salim A.C.M."/>
            <person name="Santos F.R."/>
            <person name="Schmitt R."/>
            <person name="Schneider M.P.C."/>
            <person name="Schrank A."/>
            <person name="Schrank I.S."/>
            <person name="Schuck A.F."/>
            <person name="Seuanez H.N."/>
            <person name="Silva D.W."/>
            <person name="Silva R."/>
            <person name="Silva S.C."/>
            <person name="Soares C.M.A."/>
            <person name="Souza K.R.L."/>
            <person name="Souza R.C."/>
            <person name="Staats C.C."/>
            <person name="Steffens M.B.R."/>
            <person name="Teixeira S.M.R."/>
            <person name="Urmenyi T.P."/>
            <person name="Vainstein M.H."/>
            <person name="Zuccherato L.W."/>
            <person name="Simpson A.J.G."/>
            <person name="Zaha A."/>
        </authorList>
    </citation>
    <scope>NUCLEOTIDE SEQUENCE [LARGE SCALE GENOMIC DNA]</scope>
    <source>
        <strain>J / ATCC 25934 / NCTC 10110</strain>
    </source>
</reference>
<keyword id="KW-0488">Methylation</keyword>
<keyword id="KW-0687">Ribonucleoprotein</keyword>
<keyword id="KW-0689">Ribosomal protein</keyword>
<keyword id="KW-0694">RNA-binding</keyword>
<keyword id="KW-0699">rRNA-binding</keyword>
<keyword id="KW-0820">tRNA-binding</keyword>
<sequence>MPTISQLAKGCRVKKTWKSKVPALNMLYNSLHKKELKLSAPFKRGVCTRVATMTPKKPNSALRKFARVKLSNGIEVNAYIPGEGHNLQEHSIVLIRGGKVKDLPGIRYHIVRGTQDTTGVAKRSQGRSKYGAKRPKKSK</sequence>